<sequence>MENLASLLKSHKLSQADYEHIVQILGREPNLVELGVFSAMWSEHCSYKSSKKYLRGFPTEAAWVIQGPGENAGVIDIGEGYAAVFKMESHNHPSFIEPYQGAATGVGGIMRDVFTMGARPVASLNAIRFGDIRRQDEIGKKHRYLLKGVVAGIGGYGNCMGVPTVGGEMSFEDCYNGNILVNAFTLGIAKSDEIFYGRAEGIGNPVIYVGSKTGRDGLGGAVMSSDSFDDAANQLRPTVQVGDPFAEKLLLEACLELFKTNYIVGIQDMGAAGLTSSSFEMAGRSGSGMIMHLDRVPMREQGMTPYELMLSESQERMLICAKKGYEEKVLEIFRKWELDAEVIGEVTSSGKMELFWHGEKCAEIPVLPVSEEAPMLDRPTKEPAYLAEIRSKGAQAPKEIDLKEAFMKLWSAPETMDKSWVYSQYDSMVQTNTIVGPGGGDGSLVRVKENGAALAMSADCNPRYCYLNPREGAKLAVAESGRNVAVRGARPLAITDCLNFGSPENPEVMWQFAEACEGIKEACKVLLTPVVSGNVSLYNQTNGVDIFPTPSIATVGLLPKAQKALLGAFKKEGNLLLLVGETKSEFGGSLYQKEVEGFLGGDAPVIDLHRELALWRFLEEANEAGFLESAKDVNVGGLAIALGKMSVLGQKGCKVKTALKGVDLFSESPSRAVLEVSSEHLAALESLAQKGGVALGVIGSVGGENLEIDSLSLPLQTLQEIYLRGFAKIVENL</sequence>
<keyword id="KW-0067">ATP-binding</keyword>
<keyword id="KW-0963">Cytoplasm</keyword>
<keyword id="KW-0436">Ligase</keyword>
<keyword id="KW-0460">Magnesium</keyword>
<keyword id="KW-0479">Metal-binding</keyword>
<keyword id="KW-0547">Nucleotide-binding</keyword>
<keyword id="KW-0658">Purine biosynthesis</keyword>
<keyword id="KW-1185">Reference proteome</keyword>
<organism>
    <name type="scientific">Wolinella succinogenes (strain ATCC 29543 / DSM 1740 / CCUG 13145 / JCM 31913 / LMG 7466 / NCTC 11488 / FDC 602W)</name>
    <name type="common">Vibrio succinogenes</name>
    <dbReference type="NCBI Taxonomy" id="273121"/>
    <lineage>
        <taxon>Bacteria</taxon>
        <taxon>Pseudomonadati</taxon>
        <taxon>Campylobacterota</taxon>
        <taxon>Epsilonproteobacteria</taxon>
        <taxon>Campylobacterales</taxon>
        <taxon>Helicobacteraceae</taxon>
        <taxon>Wolinella</taxon>
    </lineage>
</organism>
<comment type="function">
    <text evidence="1">Part of the phosphoribosylformylglycinamidine synthase complex involved in the purines biosynthetic pathway. Catalyzes the ATP-dependent conversion of formylglycinamide ribonucleotide (FGAR) and glutamine to yield formylglycinamidine ribonucleotide (FGAM) and glutamate. The FGAM synthase complex is composed of three subunits. PurQ produces an ammonia molecule by converting glutamine to glutamate. PurL transfers the ammonia molecule to FGAR to form FGAM in an ATP-dependent manner. PurS interacts with PurQ and PurL and is thought to assist in the transfer of the ammonia molecule from PurQ to PurL.</text>
</comment>
<comment type="catalytic activity">
    <reaction evidence="1">
        <text>N(2)-formyl-N(1)-(5-phospho-beta-D-ribosyl)glycinamide + L-glutamine + ATP + H2O = 2-formamido-N(1)-(5-O-phospho-beta-D-ribosyl)acetamidine + L-glutamate + ADP + phosphate + H(+)</text>
        <dbReference type="Rhea" id="RHEA:17129"/>
        <dbReference type="ChEBI" id="CHEBI:15377"/>
        <dbReference type="ChEBI" id="CHEBI:15378"/>
        <dbReference type="ChEBI" id="CHEBI:29985"/>
        <dbReference type="ChEBI" id="CHEBI:30616"/>
        <dbReference type="ChEBI" id="CHEBI:43474"/>
        <dbReference type="ChEBI" id="CHEBI:58359"/>
        <dbReference type="ChEBI" id="CHEBI:147286"/>
        <dbReference type="ChEBI" id="CHEBI:147287"/>
        <dbReference type="ChEBI" id="CHEBI:456216"/>
        <dbReference type="EC" id="6.3.5.3"/>
    </reaction>
</comment>
<comment type="pathway">
    <text evidence="1">Purine metabolism; IMP biosynthesis via de novo pathway; 5-amino-1-(5-phospho-D-ribosyl)imidazole from N(2)-formyl-N(1)-(5-phospho-D-ribosyl)glycinamide: step 1/2.</text>
</comment>
<comment type="subunit">
    <text evidence="1">Monomer. Part of the FGAM synthase complex composed of 1 PurL, 1 PurQ and 2 PurS subunits.</text>
</comment>
<comment type="subcellular location">
    <subcellularLocation>
        <location evidence="1">Cytoplasm</location>
    </subcellularLocation>
</comment>
<comment type="similarity">
    <text evidence="1">Belongs to the FGAMS family.</text>
</comment>
<gene>
    <name evidence="1" type="primary">purL</name>
    <name type="ordered locus">WS0827</name>
</gene>
<protein>
    <recommendedName>
        <fullName evidence="1">Phosphoribosylformylglycinamidine synthase subunit PurL</fullName>
        <shortName evidence="1">FGAM synthase</shortName>
        <ecNumber evidence="1">6.3.5.3</ecNumber>
    </recommendedName>
    <alternativeName>
        <fullName evidence="1">Formylglycinamide ribonucleotide amidotransferase subunit II</fullName>
        <shortName evidence="1">FGAR amidotransferase II</shortName>
        <shortName evidence="1">FGAR-AT II</shortName>
    </alternativeName>
    <alternativeName>
        <fullName evidence="1">Glutamine amidotransferase PurL</fullName>
    </alternativeName>
    <alternativeName>
        <fullName evidence="1">Phosphoribosylformylglycinamidine synthase subunit II</fullName>
    </alternativeName>
</protein>
<reference key="1">
    <citation type="journal article" date="2003" name="Proc. Natl. Acad. Sci. U.S.A.">
        <title>Complete genome sequence and analysis of Wolinella succinogenes.</title>
        <authorList>
            <person name="Baar C."/>
            <person name="Eppinger M."/>
            <person name="Raddatz G."/>
            <person name="Simon J."/>
            <person name="Lanz C."/>
            <person name="Klimmek O."/>
            <person name="Nandakumar R."/>
            <person name="Gross R."/>
            <person name="Rosinus A."/>
            <person name="Keller H."/>
            <person name="Jagtap P."/>
            <person name="Linke B."/>
            <person name="Meyer F."/>
            <person name="Lederer H."/>
            <person name="Schuster S.C."/>
        </authorList>
    </citation>
    <scope>NUCLEOTIDE SEQUENCE [LARGE SCALE GENOMIC DNA]</scope>
    <source>
        <strain>ATCC 29543 / DSM 1740 / CCUG 13145 / JCM 31913 / LMG 7466 / NCTC 11488 / FDC 602W</strain>
    </source>
</reference>
<accession>Q7M9L5</accession>
<proteinExistence type="inferred from homology"/>
<feature type="chain" id="PRO_0000100507" description="Phosphoribosylformylglycinamidine synthase subunit PurL">
    <location>
        <begin position="1"/>
        <end position="733"/>
    </location>
</feature>
<feature type="active site" evidence="1">
    <location>
        <position position="44"/>
    </location>
</feature>
<feature type="active site" description="Proton acceptor" evidence="1">
    <location>
        <position position="90"/>
    </location>
</feature>
<feature type="binding site" evidence="1">
    <location>
        <position position="47"/>
    </location>
    <ligand>
        <name>ATP</name>
        <dbReference type="ChEBI" id="CHEBI:30616"/>
    </ligand>
</feature>
<feature type="binding site" evidence="1">
    <location>
        <position position="86"/>
    </location>
    <ligand>
        <name>ATP</name>
        <dbReference type="ChEBI" id="CHEBI:30616"/>
    </ligand>
</feature>
<feature type="binding site" evidence="1">
    <location>
        <position position="88"/>
    </location>
    <ligand>
        <name>Mg(2+)</name>
        <dbReference type="ChEBI" id="CHEBI:18420"/>
        <label>1</label>
    </ligand>
</feature>
<feature type="binding site" evidence="1">
    <location>
        <begin position="89"/>
        <end position="92"/>
    </location>
    <ligand>
        <name>substrate</name>
    </ligand>
</feature>
<feature type="binding site" evidence="1">
    <location>
        <position position="111"/>
    </location>
    <ligand>
        <name>substrate</name>
    </ligand>
</feature>
<feature type="binding site" evidence="1">
    <location>
        <position position="112"/>
    </location>
    <ligand>
        <name>Mg(2+)</name>
        <dbReference type="ChEBI" id="CHEBI:18420"/>
        <label>2</label>
    </ligand>
</feature>
<feature type="binding site" evidence="1">
    <location>
        <position position="240"/>
    </location>
    <ligand>
        <name>substrate</name>
    </ligand>
</feature>
<feature type="binding site" evidence="1">
    <location>
        <position position="268"/>
    </location>
    <ligand>
        <name>Mg(2+)</name>
        <dbReference type="ChEBI" id="CHEBI:18420"/>
        <label>2</label>
    </ligand>
</feature>
<feature type="binding site" evidence="1">
    <location>
        <begin position="312"/>
        <end position="314"/>
    </location>
    <ligand>
        <name>substrate</name>
    </ligand>
</feature>
<feature type="binding site" evidence="1">
    <location>
        <position position="496"/>
    </location>
    <ligand>
        <name>ATP</name>
        <dbReference type="ChEBI" id="CHEBI:30616"/>
    </ligand>
</feature>
<feature type="binding site" evidence="1">
    <location>
        <position position="533"/>
    </location>
    <ligand>
        <name>ATP</name>
        <dbReference type="ChEBI" id="CHEBI:30616"/>
    </ligand>
</feature>
<feature type="binding site" evidence="1">
    <location>
        <position position="534"/>
    </location>
    <ligand>
        <name>Mg(2+)</name>
        <dbReference type="ChEBI" id="CHEBI:18420"/>
        <label>1</label>
    </ligand>
</feature>
<feature type="binding site" evidence="1">
    <location>
        <position position="536"/>
    </location>
    <ligand>
        <name>substrate</name>
    </ligand>
</feature>
<dbReference type="EC" id="6.3.5.3" evidence="1"/>
<dbReference type="EMBL" id="BX571659">
    <property type="protein sequence ID" value="CAE09938.1"/>
    <property type="molecule type" value="Genomic_DNA"/>
</dbReference>
<dbReference type="RefSeq" id="WP_011138735.1">
    <property type="nucleotide sequence ID" value="NC_005090.1"/>
</dbReference>
<dbReference type="SMR" id="Q7M9L5"/>
<dbReference type="STRING" id="273121.WS0827"/>
<dbReference type="KEGG" id="wsu:WS0827"/>
<dbReference type="eggNOG" id="COG0046">
    <property type="taxonomic scope" value="Bacteria"/>
</dbReference>
<dbReference type="HOGENOM" id="CLU_003100_0_1_7"/>
<dbReference type="UniPathway" id="UPA00074">
    <property type="reaction ID" value="UER00128"/>
</dbReference>
<dbReference type="Proteomes" id="UP000000422">
    <property type="component" value="Chromosome"/>
</dbReference>
<dbReference type="GO" id="GO:0005737">
    <property type="term" value="C:cytoplasm"/>
    <property type="evidence" value="ECO:0007669"/>
    <property type="project" value="UniProtKB-SubCell"/>
</dbReference>
<dbReference type="GO" id="GO:0005524">
    <property type="term" value="F:ATP binding"/>
    <property type="evidence" value="ECO:0007669"/>
    <property type="project" value="UniProtKB-UniRule"/>
</dbReference>
<dbReference type="GO" id="GO:0000287">
    <property type="term" value="F:magnesium ion binding"/>
    <property type="evidence" value="ECO:0007669"/>
    <property type="project" value="UniProtKB-UniRule"/>
</dbReference>
<dbReference type="GO" id="GO:0004642">
    <property type="term" value="F:phosphoribosylformylglycinamidine synthase activity"/>
    <property type="evidence" value="ECO:0007669"/>
    <property type="project" value="UniProtKB-UniRule"/>
</dbReference>
<dbReference type="GO" id="GO:0006189">
    <property type="term" value="P:'de novo' IMP biosynthetic process"/>
    <property type="evidence" value="ECO:0007669"/>
    <property type="project" value="UniProtKB-UniRule"/>
</dbReference>
<dbReference type="CDD" id="cd02203">
    <property type="entry name" value="PurL_repeat1"/>
    <property type="match status" value="1"/>
</dbReference>
<dbReference type="CDD" id="cd02204">
    <property type="entry name" value="PurL_repeat2"/>
    <property type="match status" value="1"/>
</dbReference>
<dbReference type="FunFam" id="3.30.1330.10:FF:000004">
    <property type="entry name" value="Phosphoribosylformylglycinamidine synthase subunit PurL"/>
    <property type="match status" value="1"/>
</dbReference>
<dbReference type="Gene3D" id="3.90.650.10">
    <property type="entry name" value="PurM-like C-terminal domain"/>
    <property type="match status" value="2"/>
</dbReference>
<dbReference type="Gene3D" id="3.30.1330.10">
    <property type="entry name" value="PurM-like, N-terminal domain"/>
    <property type="match status" value="2"/>
</dbReference>
<dbReference type="HAMAP" id="MF_00420">
    <property type="entry name" value="PurL_2"/>
    <property type="match status" value="1"/>
</dbReference>
<dbReference type="InterPro" id="IPR010074">
    <property type="entry name" value="PRibForGlyAmidine_synth_PurL"/>
</dbReference>
<dbReference type="InterPro" id="IPR041609">
    <property type="entry name" value="PurL_linker"/>
</dbReference>
<dbReference type="InterPro" id="IPR010918">
    <property type="entry name" value="PurM-like_C_dom"/>
</dbReference>
<dbReference type="InterPro" id="IPR036676">
    <property type="entry name" value="PurM-like_C_sf"/>
</dbReference>
<dbReference type="InterPro" id="IPR016188">
    <property type="entry name" value="PurM-like_N"/>
</dbReference>
<dbReference type="InterPro" id="IPR036921">
    <property type="entry name" value="PurM-like_N_sf"/>
</dbReference>
<dbReference type="NCBIfam" id="TIGR01736">
    <property type="entry name" value="FGAM_synth_II"/>
    <property type="match status" value="1"/>
</dbReference>
<dbReference type="NCBIfam" id="NF002290">
    <property type="entry name" value="PRK01213.1"/>
    <property type="match status" value="1"/>
</dbReference>
<dbReference type="PANTHER" id="PTHR43555">
    <property type="entry name" value="PHOSPHORIBOSYLFORMYLGLYCINAMIDINE SYNTHASE SUBUNIT PURL"/>
    <property type="match status" value="1"/>
</dbReference>
<dbReference type="PANTHER" id="PTHR43555:SF1">
    <property type="entry name" value="PHOSPHORIBOSYLFORMYLGLYCINAMIDINE SYNTHASE SUBUNIT PURL"/>
    <property type="match status" value="1"/>
</dbReference>
<dbReference type="Pfam" id="PF00586">
    <property type="entry name" value="AIRS"/>
    <property type="match status" value="2"/>
</dbReference>
<dbReference type="Pfam" id="PF02769">
    <property type="entry name" value="AIRS_C"/>
    <property type="match status" value="2"/>
</dbReference>
<dbReference type="Pfam" id="PF18072">
    <property type="entry name" value="FGAR-AT_linker"/>
    <property type="match status" value="1"/>
</dbReference>
<dbReference type="PIRSF" id="PIRSF001587">
    <property type="entry name" value="FGAM_synthase_II"/>
    <property type="match status" value="1"/>
</dbReference>
<dbReference type="SUPFAM" id="SSF56042">
    <property type="entry name" value="PurM C-terminal domain-like"/>
    <property type="match status" value="2"/>
</dbReference>
<dbReference type="SUPFAM" id="SSF55326">
    <property type="entry name" value="PurM N-terminal domain-like"/>
    <property type="match status" value="2"/>
</dbReference>
<evidence type="ECO:0000255" key="1">
    <source>
        <dbReference type="HAMAP-Rule" id="MF_00420"/>
    </source>
</evidence>
<name>PURL_WOLSU</name>